<name>T23O_BURA4</name>
<comment type="function">
    <text evidence="1">Heme-dependent dioxygenase that catalyzes the oxidative cleavage of the L-tryptophan (L-Trp) pyrrole ring and converts L-tryptophan to N-formyl-L-kynurenine. Catalyzes the oxidative cleavage of the indole moiety.</text>
</comment>
<comment type="catalytic activity">
    <reaction evidence="1">
        <text>L-tryptophan + O2 = N-formyl-L-kynurenine</text>
        <dbReference type="Rhea" id="RHEA:24536"/>
        <dbReference type="ChEBI" id="CHEBI:15379"/>
        <dbReference type="ChEBI" id="CHEBI:57912"/>
        <dbReference type="ChEBI" id="CHEBI:58629"/>
        <dbReference type="EC" id="1.13.11.11"/>
    </reaction>
</comment>
<comment type="cofactor">
    <cofactor evidence="1">
        <name>heme</name>
        <dbReference type="ChEBI" id="CHEBI:30413"/>
    </cofactor>
    <text evidence="1">Binds 1 heme group per subunit.</text>
</comment>
<comment type="pathway">
    <text evidence="1">Amino-acid degradation; L-tryptophan degradation via kynurenine pathway; L-kynurenine from L-tryptophan: step 1/2.</text>
</comment>
<comment type="subunit">
    <text evidence="1">Homotetramer.</text>
</comment>
<comment type="similarity">
    <text evidence="1">Belongs to the tryptophan 2,3-dioxygenase family.</text>
</comment>
<comment type="sequence caution" evidence="3">
    <conflict type="erroneous initiation">
        <sequence resource="EMBL-CDS" id="ACB64976"/>
    </conflict>
</comment>
<accession>B1YVH2</accession>
<proteinExistence type="inferred from homology"/>
<dbReference type="EC" id="1.13.11.11" evidence="1"/>
<dbReference type="EMBL" id="CP001025">
    <property type="protein sequence ID" value="ACB64976.1"/>
    <property type="status" value="ALT_INIT"/>
    <property type="molecule type" value="Genomic_DNA"/>
</dbReference>
<dbReference type="RefSeq" id="WP_041489848.1">
    <property type="nucleotide sequence ID" value="NC_010551.1"/>
</dbReference>
<dbReference type="SMR" id="B1YVH2"/>
<dbReference type="KEGG" id="bac:BamMC406_2498"/>
<dbReference type="HOGENOM" id="CLU_063240_0_0_4"/>
<dbReference type="OrthoDB" id="9776847at2"/>
<dbReference type="UniPathway" id="UPA00333">
    <property type="reaction ID" value="UER00453"/>
</dbReference>
<dbReference type="Proteomes" id="UP000001680">
    <property type="component" value="Chromosome 1"/>
</dbReference>
<dbReference type="GO" id="GO:0020037">
    <property type="term" value="F:heme binding"/>
    <property type="evidence" value="ECO:0000250"/>
    <property type="project" value="UniProtKB"/>
</dbReference>
<dbReference type="GO" id="GO:0046872">
    <property type="term" value="F:metal ion binding"/>
    <property type="evidence" value="ECO:0007669"/>
    <property type="project" value="UniProtKB-KW"/>
</dbReference>
<dbReference type="GO" id="GO:0004833">
    <property type="term" value="F:tryptophan 2,3-dioxygenase activity"/>
    <property type="evidence" value="ECO:0000250"/>
    <property type="project" value="UniProtKB"/>
</dbReference>
<dbReference type="GO" id="GO:0019442">
    <property type="term" value="P:L-tryptophan catabolic process to acetyl-CoA"/>
    <property type="evidence" value="ECO:0007669"/>
    <property type="project" value="TreeGrafter"/>
</dbReference>
<dbReference type="GO" id="GO:0019441">
    <property type="term" value="P:L-tryptophan catabolic process to kynurenine"/>
    <property type="evidence" value="ECO:0000250"/>
    <property type="project" value="UniProtKB"/>
</dbReference>
<dbReference type="FunFam" id="1.20.58.480:FF:000001">
    <property type="entry name" value="Tryptophan 2,3-dioxygenase"/>
    <property type="match status" value="1"/>
</dbReference>
<dbReference type="Gene3D" id="1.20.58.480">
    <property type="match status" value="1"/>
</dbReference>
<dbReference type="HAMAP" id="MF_01972">
    <property type="entry name" value="T23O"/>
    <property type="match status" value="1"/>
</dbReference>
<dbReference type="InterPro" id="IPR037217">
    <property type="entry name" value="Trp/Indoleamine_2_3_dOase-like"/>
</dbReference>
<dbReference type="InterPro" id="IPR017485">
    <property type="entry name" value="Trp_2-3-dOase_bac"/>
</dbReference>
<dbReference type="InterPro" id="IPR004981">
    <property type="entry name" value="Trp_2_3_dOase"/>
</dbReference>
<dbReference type="NCBIfam" id="TIGR03036">
    <property type="entry name" value="trp_2_3_diox"/>
    <property type="match status" value="1"/>
</dbReference>
<dbReference type="PANTHER" id="PTHR10138">
    <property type="entry name" value="TRYPTOPHAN 2,3-DIOXYGENASE"/>
    <property type="match status" value="1"/>
</dbReference>
<dbReference type="PANTHER" id="PTHR10138:SF0">
    <property type="entry name" value="TRYPTOPHAN 2,3-DIOXYGENASE"/>
    <property type="match status" value="1"/>
</dbReference>
<dbReference type="Pfam" id="PF03301">
    <property type="entry name" value="Trp_dioxygenase"/>
    <property type="match status" value="1"/>
</dbReference>
<dbReference type="SUPFAM" id="SSF140959">
    <property type="entry name" value="Indolic compounds 2,3-dioxygenase-like"/>
    <property type="match status" value="1"/>
</dbReference>
<feature type="chain" id="PRO_0000360096" description="Tryptophan 2,3-dioxygenase">
    <location>
        <begin position="1"/>
        <end position="308"/>
    </location>
</feature>
<feature type="region of interest" description="Disordered" evidence="2">
    <location>
        <begin position="1"/>
        <end position="37"/>
    </location>
</feature>
<feature type="binding site" evidence="1">
    <location>
        <begin position="77"/>
        <end position="81"/>
    </location>
    <ligand>
        <name>substrate</name>
    </ligand>
</feature>
<feature type="binding site" evidence="1">
    <location>
        <position position="139"/>
    </location>
    <ligand>
        <name>substrate</name>
    </ligand>
</feature>
<feature type="binding site" evidence="1">
    <location>
        <position position="143"/>
    </location>
    <ligand>
        <name>substrate</name>
    </ligand>
</feature>
<feature type="binding site" description="axial binding residue" evidence="1">
    <location>
        <position position="266"/>
    </location>
    <ligand>
        <name>heme</name>
        <dbReference type="ChEBI" id="CHEBI:30413"/>
    </ligand>
    <ligandPart>
        <name>Fe</name>
        <dbReference type="ChEBI" id="CHEBI:18248"/>
    </ligandPart>
</feature>
<feature type="binding site" evidence="1">
    <location>
        <position position="280"/>
    </location>
    <ligand>
        <name>substrate</name>
    </ligand>
</feature>
<protein>
    <recommendedName>
        <fullName evidence="1">Tryptophan 2,3-dioxygenase</fullName>
        <shortName evidence="1">TDO</shortName>
        <ecNumber evidence="1">1.13.11.11</ecNumber>
    </recommendedName>
    <alternativeName>
        <fullName evidence="1">Tryptamin 2,3-dioxygenase</fullName>
    </alternativeName>
    <alternativeName>
        <fullName evidence="1">Tryptophan oxygenase</fullName>
        <shortName evidence="1">TO</shortName>
        <shortName evidence="1">TRPO</shortName>
    </alternativeName>
    <alternativeName>
        <fullName evidence="1">Tryptophan pyrrolase</fullName>
    </alternativeName>
    <alternativeName>
        <fullName evidence="1">Tryptophanase</fullName>
    </alternativeName>
</protein>
<gene>
    <name evidence="1" type="primary">kynA</name>
    <name type="ordered locus">BamMC406_2498</name>
</gene>
<evidence type="ECO:0000255" key="1">
    <source>
        <dbReference type="HAMAP-Rule" id="MF_01972"/>
    </source>
</evidence>
<evidence type="ECO:0000256" key="2">
    <source>
        <dbReference type="SAM" id="MobiDB-lite"/>
    </source>
</evidence>
<evidence type="ECO:0000305" key="3"/>
<organism>
    <name type="scientific">Burkholderia ambifaria (strain MC40-6)</name>
    <dbReference type="NCBI Taxonomy" id="398577"/>
    <lineage>
        <taxon>Bacteria</taxon>
        <taxon>Pseudomonadati</taxon>
        <taxon>Pseudomonadota</taxon>
        <taxon>Betaproteobacteria</taxon>
        <taxon>Burkholderiales</taxon>
        <taxon>Burkholderiaceae</taxon>
        <taxon>Burkholderia</taxon>
        <taxon>Burkholderia cepacia complex</taxon>
    </lineage>
</organism>
<reference key="1">
    <citation type="submission" date="2008-04" db="EMBL/GenBank/DDBJ databases">
        <title>Complete sequence of chromosome 1 of Burkholderia ambifaria MC40-6.</title>
        <authorList>
            <person name="Copeland A."/>
            <person name="Lucas S."/>
            <person name="Lapidus A."/>
            <person name="Glavina del Rio T."/>
            <person name="Dalin E."/>
            <person name="Tice H."/>
            <person name="Pitluck S."/>
            <person name="Chain P."/>
            <person name="Malfatti S."/>
            <person name="Shin M."/>
            <person name="Vergez L."/>
            <person name="Lang D."/>
            <person name="Schmutz J."/>
            <person name="Larimer F."/>
            <person name="Land M."/>
            <person name="Hauser L."/>
            <person name="Kyrpides N."/>
            <person name="Lykidis A."/>
            <person name="Ramette A."/>
            <person name="Konstantinidis K."/>
            <person name="Tiedje J."/>
            <person name="Richardson P."/>
        </authorList>
    </citation>
    <scope>NUCLEOTIDE SEQUENCE [LARGE SCALE GENOMIC DNA]</scope>
    <source>
        <strain>MC40-6</strain>
    </source>
</reference>
<sequence>MKPPGDNAPAGCPFSGARAAQPAHEAPHVPGDAAGETGWHDAQLDFSKSMSYGDYLSLNSILDAQHPLSPDHNEMLFIIQHQTSELWMKLALFELRGALDAVRGDALPPAFKMLARVSRILEQLVQAWNVLSTMTPSEYSAMRPYLGQSSGFQSYQYRQLEFLLGNKNVQMLQPHAHRPDILEQVRATLEAPSFYDEVVRLLARRGFPIASERLERDWTQPMRHDETVEAAWLEVYRHPQQHWELYEMAEELVDLEDAFRQWRFRHVTTVERIIGFKQGTGGTSGAPYLRKMLDVVLFPELWHVRTTL</sequence>
<keyword id="KW-0223">Dioxygenase</keyword>
<keyword id="KW-0349">Heme</keyword>
<keyword id="KW-0408">Iron</keyword>
<keyword id="KW-0479">Metal-binding</keyword>
<keyword id="KW-0560">Oxidoreductase</keyword>
<keyword id="KW-0823">Tryptophan catabolism</keyword>